<dbReference type="EMBL" id="AP007255">
    <property type="protein sequence ID" value="BAE51156.1"/>
    <property type="molecule type" value="Genomic_DNA"/>
</dbReference>
<dbReference type="RefSeq" id="WP_009869122.1">
    <property type="nucleotide sequence ID" value="NC_007626.1"/>
</dbReference>
<dbReference type="SMR" id="Q2W4R9"/>
<dbReference type="STRING" id="342108.amb2352"/>
<dbReference type="KEGG" id="mag:amb2352"/>
<dbReference type="HOGENOM" id="CLU_129084_1_3_5"/>
<dbReference type="OrthoDB" id="9801927at2"/>
<dbReference type="Proteomes" id="UP000007058">
    <property type="component" value="Chromosome"/>
</dbReference>
<dbReference type="GO" id="GO:0015934">
    <property type="term" value="C:large ribosomal subunit"/>
    <property type="evidence" value="ECO:0007669"/>
    <property type="project" value="InterPro"/>
</dbReference>
<dbReference type="GO" id="GO:0003735">
    <property type="term" value="F:structural constituent of ribosome"/>
    <property type="evidence" value="ECO:0007669"/>
    <property type="project" value="InterPro"/>
</dbReference>
<dbReference type="GO" id="GO:0006412">
    <property type="term" value="P:translation"/>
    <property type="evidence" value="ECO:0007669"/>
    <property type="project" value="UniProtKB-UniRule"/>
</dbReference>
<dbReference type="FunFam" id="1.20.5.640:FF:000001">
    <property type="entry name" value="50S ribosomal protein L32"/>
    <property type="match status" value="1"/>
</dbReference>
<dbReference type="Gene3D" id="1.20.5.640">
    <property type="entry name" value="Single helix bin"/>
    <property type="match status" value="1"/>
</dbReference>
<dbReference type="HAMAP" id="MF_00340">
    <property type="entry name" value="Ribosomal_bL32"/>
    <property type="match status" value="1"/>
</dbReference>
<dbReference type="InterPro" id="IPR002677">
    <property type="entry name" value="Ribosomal_bL32"/>
</dbReference>
<dbReference type="InterPro" id="IPR044957">
    <property type="entry name" value="Ribosomal_bL32_bact"/>
</dbReference>
<dbReference type="InterPro" id="IPR011332">
    <property type="entry name" value="Ribosomal_zn-bd"/>
</dbReference>
<dbReference type="NCBIfam" id="TIGR01031">
    <property type="entry name" value="rpmF_bact"/>
    <property type="match status" value="1"/>
</dbReference>
<dbReference type="PANTHER" id="PTHR35534">
    <property type="entry name" value="50S RIBOSOMAL PROTEIN L32"/>
    <property type="match status" value="1"/>
</dbReference>
<dbReference type="PANTHER" id="PTHR35534:SF1">
    <property type="entry name" value="LARGE RIBOSOMAL SUBUNIT PROTEIN BL32"/>
    <property type="match status" value="1"/>
</dbReference>
<dbReference type="Pfam" id="PF01783">
    <property type="entry name" value="Ribosomal_L32p"/>
    <property type="match status" value="1"/>
</dbReference>
<dbReference type="SUPFAM" id="SSF57829">
    <property type="entry name" value="Zn-binding ribosomal proteins"/>
    <property type="match status" value="1"/>
</dbReference>
<evidence type="ECO:0000255" key="1">
    <source>
        <dbReference type="HAMAP-Rule" id="MF_00340"/>
    </source>
</evidence>
<evidence type="ECO:0000305" key="2"/>
<organism>
    <name type="scientific">Paramagnetospirillum magneticum (strain ATCC 700264 / AMB-1)</name>
    <name type="common">Magnetospirillum magneticum</name>
    <dbReference type="NCBI Taxonomy" id="342108"/>
    <lineage>
        <taxon>Bacteria</taxon>
        <taxon>Pseudomonadati</taxon>
        <taxon>Pseudomonadota</taxon>
        <taxon>Alphaproteobacteria</taxon>
        <taxon>Rhodospirillales</taxon>
        <taxon>Magnetospirillaceae</taxon>
        <taxon>Paramagnetospirillum</taxon>
    </lineage>
</organism>
<feature type="chain" id="PRO_0000296496" description="Large ribosomal subunit protein bL32">
    <location>
        <begin position="1"/>
        <end position="60"/>
    </location>
</feature>
<protein>
    <recommendedName>
        <fullName evidence="1">Large ribosomal subunit protein bL32</fullName>
    </recommendedName>
    <alternativeName>
        <fullName evidence="2">50S ribosomal protein L32</fullName>
    </alternativeName>
</protein>
<sequence length="60" mass="6524">MAVPKKKTSKSRRDMRRAHHALVNVTGAECPNCGEVKLPHHVCGSCGHYDGREVVAQAEA</sequence>
<proteinExistence type="inferred from homology"/>
<name>RL32_PARM1</name>
<reference key="1">
    <citation type="journal article" date="2005" name="DNA Res.">
        <title>Complete genome sequence of the facultative anaerobic magnetotactic bacterium Magnetospirillum sp. strain AMB-1.</title>
        <authorList>
            <person name="Matsunaga T."/>
            <person name="Okamura Y."/>
            <person name="Fukuda Y."/>
            <person name="Wahyudi A.T."/>
            <person name="Murase Y."/>
            <person name="Takeyama H."/>
        </authorList>
    </citation>
    <scope>NUCLEOTIDE SEQUENCE [LARGE SCALE GENOMIC DNA]</scope>
    <source>
        <strain>ATCC 700264 / AMB-1</strain>
    </source>
</reference>
<keyword id="KW-0687">Ribonucleoprotein</keyword>
<keyword id="KW-0689">Ribosomal protein</keyword>
<gene>
    <name evidence="1" type="primary">rpmF</name>
    <name type="ordered locus">amb2352</name>
</gene>
<comment type="similarity">
    <text evidence="1">Belongs to the bacterial ribosomal protein bL32 family.</text>
</comment>
<accession>Q2W4R9</accession>